<name>MATK_KOKDR</name>
<protein>
    <recommendedName>
        <fullName evidence="1">Maturase K</fullName>
    </recommendedName>
    <alternativeName>
        <fullName evidence="1">Intron maturase</fullName>
    </alternativeName>
</protein>
<comment type="function">
    <text evidence="1">Usually encoded in the trnK tRNA gene intron. Probably assists in splicing its own and other chloroplast group II introns.</text>
</comment>
<comment type="subcellular location">
    <subcellularLocation>
        <location>Plastid</location>
        <location>Chloroplast</location>
    </subcellularLocation>
</comment>
<comment type="similarity">
    <text evidence="1">Belongs to the intron maturase 2 family. MatK subfamily.</text>
</comment>
<dbReference type="EMBL" id="AF403564">
    <property type="protein sequence ID" value="AAK91317.1"/>
    <property type="molecule type" value="Genomic_DNA"/>
</dbReference>
<dbReference type="GO" id="GO:0009507">
    <property type="term" value="C:chloroplast"/>
    <property type="evidence" value="ECO:0007669"/>
    <property type="project" value="UniProtKB-SubCell"/>
</dbReference>
<dbReference type="GO" id="GO:0003723">
    <property type="term" value="F:RNA binding"/>
    <property type="evidence" value="ECO:0007669"/>
    <property type="project" value="UniProtKB-KW"/>
</dbReference>
<dbReference type="GO" id="GO:0006397">
    <property type="term" value="P:mRNA processing"/>
    <property type="evidence" value="ECO:0007669"/>
    <property type="project" value="UniProtKB-KW"/>
</dbReference>
<dbReference type="GO" id="GO:0008380">
    <property type="term" value="P:RNA splicing"/>
    <property type="evidence" value="ECO:0007669"/>
    <property type="project" value="UniProtKB-UniRule"/>
</dbReference>
<dbReference type="GO" id="GO:0008033">
    <property type="term" value="P:tRNA processing"/>
    <property type="evidence" value="ECO:0007669"/>
    <property type="project" value="UniProtKB-KW"/>
</dbReference>
<dbReference type="HAMAP" id="MF_01390">
    <property type="entry name" value="MatK"/>
    <property type="match status" value="1"/>
</dbReference>
<dbReference type="InterPro" id="IPR024937">
    <property type="entry name" value="Domain_X"/>
</dbReference>
<dbReference type="InterPro" id="IPR002866">
    <property type="entry name" value="Maturase_MatK"/>
</dbReference>
<dbReference type="InterPro" id="IPR024942">
    <property type="entry name" value="Maturase_MatK_N"/>
</dbReference>
<dbReference type="PANTHER" id="PTHR34811">
    <property type="entry name" value="MATURASE K"/>
    <property type="match status" value="1"/>
</dbReference>
<dbReference type="PANTHER" id="PTHR34811:SF1">
    <property type="entry name" value="MATURASE K"/>
    <property type="match status" value="1"/>
</dbReference>
<dbReference type="Pfam" id="PF01348">
    <property type="entry name" value="Intron_maturas2"/>
    <property type="match status" value="1"/>
</dbReference>
<dbReference type="Pfam" id="PF01824">
    <property type="entry name" value="MatK_N"/>
    <property type="match status" value="1"/>
</dbReference>
<gene>
    <name evidence="1" type="primary">matK</name>
</gene>
<sequence>MEQFQVYLELNRSRRHDFLYPLIFRESIYALAHGHGLNKSMIFFENQGYGNKFSSLIVKRLILRMDQQKRLISSANDSNQNPVFGHNNNLYSQMVAAGFAVIVEIPFSLRLISYSQGAEVAKSHNLQSIHSIFPFLEDKLSHLNYVLEALIPHPIHLEILVQALRYWVKDASSLHLLRFSLYEYCNLKSFITPKKSISIFNPRLFLFLYNSHACEYEFIFLFLRNQSSHLRSTSSGVFLERIFFYGKIKYLGEVFYNDFQNNLWLFKDPFIHFIRYQGKSILASKDTSLLINKWKYYFVDLWQYYFYLWSQSGRVRINQLSKYSLDFLGYLSSVRLNPSVVRSQMLENSFLIDNAMKTLDTRIPIISLIGSLSKAKFCNTLGHPISKPTWADSPDSDIIDRFVRICRNLSHYHSGSSKKKSLYRIKYILRFSCVKTLARKHKSTVRAFLKKLGSEFLEEFFTETEEEHAFSLIFPRGFFALRKFDRGRIWYLDIICIDALVNHS</sequence>
<organism>
    <name type="scientific">Kokia drynarioides</name>
    <name type="common">Hawaiian tree cotton</name>
    <name type="synonym">Gossypium drynarioides</name>
    <dbReference type="NCBI Taxonomy" id="47617"/>
    <lineage>
        <taxon>Eukaryota</taxon>
        <taxon>Viridiplantae</taxon>
        <taxon>Streptophyta</taxon>
        <taxon>Embryophyta</taxon>
        <taxon>Tracheophyta</taxon>
        <taxon>Spermatophyta</taxon>
        <taxon>Magnoliopsida</taxon>
        <taxon>eudicotyledons</taxon>
        <taxon>Gunneridae</taxon>
        <taxon>Pentapetalae</taxon>
        <taxon>rosids</taxon>
        <taxon>malvids</taxon>
        <taxon>Malvales</taxon>
        <taxon>Malvaceae</taxon>
        <taxon>Malvoideae</taxon>
        <taxon>Kokia</taxon>
    </lineage>
</organism>
<keyword id="KW-0150">Chloroplast</keyword>
<keyword id="KW-0507">mRNA processing</keyword>
<keyword id="KW-0934">Plastid</keyword>
<keyword id="KW-0694">RNA-binding</keyword>
<keyword id="KW-0819">tRNA processing</keyword>
<reference key="1">
    <citation type="journal article" date="2002" name="Am. J. Bot.">
        <title>Rapid diversification of the cotton genus (Gossypium: Malvaceae) revealed by analysis of sixteen nuclear and chloroplast genes.</title>
        <authorList>
            <person name="Cronn R.C."/>
            <person name="Small R.L."/>
            <person name="Haselkorn T."/>
            <person name="Wendel J.F."/>
        </authorList>
        <dbReference type="AGRICOLA" id="IND23314348"/>
    </citation>
    <scope>NUCLEOTIDE SEQUENCE [GENOMIC DNA]</scope>
</reference>
<evidence type="ECO:0000255" key="1">
    <source>
        <dbReference type="HAMAP-Rule" id="MF_01390"/>
    </source>
</evidence>
<accession>Q95EF3</accession>
<feature type="chain" id="PRO_0000143449" description="Maturase K">
    <location>
        <begin position="1"/>
        <end position="504"/>
    </location>
</feature>
<geneLocation type="chloroplast"/>
<proteinExistence type="inferred from homology"/>